<dbReference type="EMBL" id="CP002685">
    <property type="protein sequence ID" value="AEC06590.1"/>
    <property type="molecule type" value="Genomic_DNA"/>
</dbReference>
<dbReference type="EMBL" id="CP002685">
    <property type="protein sequence ID" value="ANM63317.1"/>
    <property type="molecule type" value="Genomic_DNA"/>
</dbReference>
<dbReference type="EMBL" id="AK228914">
    <property type="protein sequence ID" value="BAF00803.1"/>
    <property type="molecule type" value="mRNA"/>
</dbReference>
<dbReference type="PIR" id="E84548">
    <property type="entry name" value="E84548"/>
</dbReference>
<dbReference type="RefSeq" id="NP_001325411.1">
    <property type="nucleotide sequence ID" value="NM_001335538.1"/>
</dbReference>
<dbReference type="RefSeq" id="NP_179305.2">
    <property type="nucleotide sequence ID" value="NM_127268.4"/>
</dbReference>
<dbReference type="SMR" id="Q0WPZ6"/>
<dbReference type="FunCoup" id="Q0WPZ6">
    <property type="interactions" value="820"/>
</dbReference>
<dbReference type="PaxDb" id="3702-AT2G17140.1"/>
<dbReference type="ProteomicsDB" id="249423"/>
<dbReference type="EnsemblPlants" id="AT2G17140.1">
    <property type="protein sequence ID" value="AT2G17140.1"/>
    <property type="gene ID" value="AT2G17140"/>
</dbReference>
<dbReference type="EnsemblPlants" id="AT2G17140.2">
    <property type="protein sequence ID" value="AT2G17140.2"/>
    <property type="gene ID" value="AT2G17140"/>
</dbReference>
<dbReference type="GeneID" id="816219"/>
<dbReference type="Gramene" id="AT2G17140.1">
    <property type="protein sequence ID" value="AT2G17140.1"/>
    <property type="gene ID" value="AT2G17140"/>
</dbReference>
<dbReference type="Gramene" id="AT2G17140.2">
    <property type="protein sequence ID" value="AT2G17140.2"/>
    <property type="gene ID" value="AT2G17140"/>
</dbReference>
<dbReference type="KEGG" id="ath:AT2G17140"/>
<dbReference type="Araport" id="AT2G17140"/>
<dbReference type="TAIR" id="AT2G17140"/>
<dbReference type="eggNOG" id="KOG4197">
    <property type="taxonomic scope" value="Eukaryota"/>
</dbReference>
<dbReference type="HOGENOM" id="CLU_002706_49_10_1"/>
<dbReference type="InParanoid" id="Q0WPZ6"/>
<dbReference type="OMA" id="VDGMWNE"/>
<dbReference type="PhylomeDB" id="Q0WPZ6"/>
<dbReference type="PRO" id="PR:Q0WPZ6"/>
<dbReference type="Proteomes" id="UP000006548">
    <property type="component" value="Chromosome 2"/>
</dbReference>
<dbReference type="ExpressionAtlas" id="Q0WPZ6">
    <property type="expression patterns" value="baseline and differential"/>
</dbReference>
<dbReference type="Gene3D" id="1.25.40.10">
    <property type="entry name" value="Tetratricopeptide repeat domain"/>
    <property type="match status" value="7"/>
</dbReference>
<dbReference type="InterPro" id="IPR002885">
    <property type="entry name" value="Pentatricopeptide_rpt"/>
</dbReference>
<dbReference type="InterPro" id="IPR011990">
    <property type="entry name" value="TPR-like_helical_dom_sf"/>
</dbReference>
<dbReference type="NCBIfam" id="TIGR00756">
    <property type="entry name" value="PPR"/>
    <property type="match status" value="14"/>
</dbReference>
<dbReference type="PANTHER" id="PTHR45613:SF9">
    <property type="entry name" value="MITOCHONDRIAL GROUP I INTRON SPLICING FACTOR CCM1"/>
    <property type="match status" value="1"/>
</dbReference>
<dbReference type="PANTHER" id="PTHR45613">
    <property type="entry name" value="PENTATRICOPEPTIDE REPEAT-CONTAINING PROTEIN"/>
    <property type="match status" value="1"/>
</dbReference>
<dbReference type="Pfam" id="PF01535">
    <property type="entry name" value="PPR"/>
    <property type="match status" value="2"/>
</dbReference>
<dbReference type="Pfam" id="PF12854">
    <property type="entry name" value="PPR_1"/>
    <property type="match status" value="3"/>
</dbReference>
<dbReference type="Pfam" id="PF13041">
    <property type="entry name" value="PPR_2"/>
    <property type="match status" value="6"/>
</dbReference>
<dbReference type="PROSITE" id="PS51375">
    <property type="entry name" value="PPR"/>
    <property type="match status" value="19"/>
</dbReference>
<gene>
    <name type="ordered locus">At2g17140</name>
    <name type="ORF">F6P23.26</name>
</gene>
<reference key="1">
    <citation type="journal article" date="1999" name="Nature">
        <title>Sequence and analysis of chromosome 2 of the plant Arabidopsis thaliana.</title>
        <authorList>
            <person name="Lin X."/>
            <person name="Kaul S."/>
            <person name="Rounsley S.D."/>
            <person name="Shea T.P."/>
            <person name="Benito M.-I."/>
            <person name="Town C.D."/>
            <person name="Fujii C.Y."/>
            <person name="Mason T.M."/>
            <person name="Bowman C.L."/>
            <person name="Barnstead M.E."/>
            <person name="Feldblyum T.V."/>
            <person name="Buell C.R."/>
            <person name="Ketchum K.A."/>
            <person name="Lee J.J."/>
            <person name="Ronning C.M."/>
            <person name="Koo H.L."/>
            <person name="Moffat K.S."/>
            <person name="Cronin L.A."/>
            <person name="Shen M."/>
            <person name="Pai G."/>
            <person name="Van Aken S."/>
            <person name="Umayam L."/>
            <person name="Tallon L.J."/>
            <person name="Gill J.E."/>
            <person name="Adams M.D."/>
            <person name="Carrera A.J."/>
            <person name="Creasy T.H."/>
            <person name="Goodman H.M."/>
            <person name="Somerville C.R."/>
            <person name="Copenhaver G.P."/>
            <person name="Preuss D."/>
            <person name="Nierman W.C."/>
            <person name="White O."/>
            <person name="Eisen J.A."/>
            <person name="Salzberg S.L."/>
            <person name="Fraser C.M."/>
            <person name="Venter J.C."/>
        </authorList>
    </citation>
    <scope>NUCLEOTIDE SEQUENCE [LARGE SCALE GENOMIC DNA]</scope>
    <source>
        <strain>cv. Columbia</strain>
    </source>
</reference>
<reference key="2">
    <citation type="journal article" date="2017" name="Plant J.">
        <title>Araport11: a complete reannotation of the Arabidopsis thaliana reference genome.</title>
        <authorList>
            <person name="Cheng C.Y."/>
            <person name="Krishnakumar V."/>
            <person name="Chan A.P."/>
            <person name="Thibaud-Nissen F."/>
            <person name="Schobel S."/>
            <person name="Town C.D."/>
        </authorList>
    </citation>
    <scope>GENOME REANNOTATION</scope>
    <source>
        <strain>cv. Columbia</strain>
    </source>
</reference>
<reference key="3">
    <citation type="submission" date="2006-07" db="EMBL/GenBank/DDBJ databases">
        <title>Large-scale analysis of RIKEN Arabidopsis full-length (RAFL) cDNAs.</title>
        <authorList>
            <person name="Totoki Y."/>
            <person name="Seki M."/>
            <person name="Ishida J."/>
            <person name="Nakajima M."/>
            <person name="Enju A."/>
            <person name="Kamiya A."/>
            <person name="Narusaka M."/>
            <person name="Shin-i T."/>
            <person name="Nakagawa M."/>
            <person name="Sakamoto N."/>
            <person name="Oishi K."/>
            <person name="Kohara Y."/>
            <person name="Kobayashi M."/>
            <person name="Toyoda A."/>
            <person name="Sakaki Y."/>
            <person name="Sakurai T."/>
            <person name="Iida K."/>
            <person name="Akiyama K."/>
            <person name="Satou M."/>
            <person name="Toyoda T."/>
            <person name="Konagaya A."/>
            <person name="Carninci P."/>
            <person name="Kawai J."/>
            <person name="Hayashizaki Y."/>
            <person name="Shinozaki K."/>
        </authorList>
    </citation>
    <scope>NUCLEOTIDE SEQUENCE [LARGE SCALE MRNA]</scope>
    <source>
        <strain>cv. Columbia</strain>
    </source>
</reference>
<reference key="4">
    <citation type="journal article" date="2004" name="Plant Cell">
        <title>Genome-wide analysis of Arabidopsis pentatricopeptide repeat proteins reveals their essential role in organelle biogenesis.</title>
        <authorList>
            <person name="Lurin C."/>
            <person name="Andres C."/>
            <person name="Aubourg S."/>
            <person name="Bellaoui M."/>
            <person name="Bitton F."/>
            <person name="Bruyere C."/>
            <person name="Caboche M."/>
            <person name="Debast C."/>
            <person name="Gualberto J."/>
            <person name="Hoffmann B."/>
            <person name="Lecharny A."/>
            <person name="Le Ret M."/>
            <person name="Martin-Magniette M.-L."/>
            <person name="Mireau H."/>
            <person name="Peeters N."/>
            <person name="Renou J.-P."/>
            <person name="Szurek B."/>
            <person name="Taconnat L."/>
            <person name="Small I."/>
        </authorList>
    </citation>
    <scope>GENE FAMILY</scope>
</reference>
<name>PP158_ARATH</name>
<evidence type="ECO:0000305" key="1"/>
<feature type="chain" id="PRO_0000356017" description="Pentatricopeptide repeat-containing protein At2g17140">
    <location>
        <begin position="1"/>
        <end position="874"/>
    </location>
</feature>
<feature type="repeat" description="PPR 1">
    <location>
        <begin position="111"/>
        <end position="145"/>
    </location>
</feature>
<feature type="repeat" description="PPR 2">
    <location>
        <begin position="146"/>
        <end position="180"/>
    </location>
</feature>
<feature type="repeat" description="PPR 3">
    <location>
        <begin position="181"/>
        <end position="215"/>
    </location>
</feature>
<feature type="repeat" description="PPR 4">
    <location>
        <begin position="216"/>
        <end position="250"/>
    </location>
</feature>
<feature type="repeat" description="PPR 5">
    <location>
        <begin position="251"/>
        <end position="285"/>
    </location>
</feature>
<feature type="repeat" description="PPR 6">
    <location>
        <begin position="290"/>
        <end position="320"/>
    </location>
</feature>
<feature type="repeat" description="PPR 7">
    <location>
        <begin position="325"/>
        <end position="359"/>
    </location>
</feature>
<feature type="repeat" description="PPR 8">
    <location>
        <begin position="360"/>
        <end position="394"/>
    </location>
</feature>
<feature type="repeat" description="PPR 9">
    <location>
        <begin position="395"/>
        <end position="429"/>
    </location>
</feature>
<feature type="repeat" description="PPR 10">
    <location>
        <begin position="430"/>
        <end position="464"/>
    </location>
</feature>
<feature type="repeat" description="PPR 11">
    <location>
        <begin position="465"/>
        <end position="499"/>
    </location>
</feature>
<feature type="repeat" description="PPR 12">
    <location>
        <begin position="523"/>
        <end position="557"/>
    </location>
</feature>
<feature type="repeat" description="PPR 13">
    <location>
        <begin position="558"/>
        <end position="592"/>
    </location>
</feature>
<feature type="repeat" description="PPR 14">
    <location>
        <begin position="593"/>
        <end position="627"/>
    </location>
</feature>
<feature type="repeat" description="PPR 15">
    <location>
        <begin position="628"/>
        <end position="662"/>
    </location>
</feature>
<feature type="repeat" description="PPR 16">
    <location>
        <begin position="663"/>
        <end position="693"/>
    </location>
</feature>
<feature type="repeat" description="PPR 17">
    <location>
        <begin position="697"/>
        <end position="731"/>
    </location>
</feature>
<feature type="repeat" description="PPR 18">
    <location>
        <begin position="732"/>
        <end position="766"/>
    </location>
</feature>
<feature type="repeat" description="PPR 19">
    <location>
        <begin position="767"/>
        <end position="797"/>
    </location>
</feature>
<keyword id="KW-1185">Reference proteome</keyword>
<keyword id="KW-0677">Repeat</keyword>
<organism>
    <name type="scientific">Arabidopsis thaliana</name>
    <name type="common">Mouse-ear cress</name>
    <dbReference type="NCBI Taxonomy" id="3702"/>
    <lineage>
        <taxon>Eukaryota</taxon>
        <taxon>Viridiplantae</taxon>
        <taxon>Streptophyta</taxon>
        <taxon>Embryophyta</taxon>
        <taxon>Tracheophyta</taxon>
        <taxon>Spermatophyta</taxon>
        <taxon>Magnoliopsida</taxon>
        <taxon>eudicotyledons</taxon>
        <taxon>Gunneridae</taxon>
        <taxon>Pentapetalae</taxon>
        <taxon>rosids</taxon>
        <taxon>malvids</taxon>
        <taxon>Brassicales</taxon>
        <taxon>Brassicaceae</taxon>
        <taxon>Camelineae</taxon>
        <taxon>Arabidopsis</taxon>
    </lineage>
</organism>
<accession>Q0WPZ6</accession>
<accession>Q7XJT3</accession>
<proteinExistence type="evidence at transcript level"/>
<protein>
    <recommendedName>
        <fullName>Pentatricopeptide repeat-containing protein At2g17140</fullName>
    </recommendedName>
</protein>
<comment type="similarity">
    <text evidence="1">Belongs to the PPR family. P subfamily.</text>
</comment>
<comment type="online information" name="Pentatricopeptide repeat proteins">
    <link uri="https://ppr.plantenergy.uwa.edu.au"/>
</comment>
<sequence>MEQSLVKALLKNTNNPRLAWRIFKRIFSSPSEESHGISLDATPTIARILVRAKMHEEIQELHNLILSSSIQKTKLSSLLSVVSIFAKSNHIDKAFPQFQLVRSRFPENKPSVYLYNLLLESCIKERRVEFVSWLYKDMVLCGIAPQTYTFNLLIRALCDSSCVDAARELFDEMPEKGCKPNEFTFGILVRGYCKAGLTDKGLELLNAMESFGVLPNKVIYNTIVSSFCREGRNDDSEKMVEKMREEGLVPDIVTFNSRISALCKEGKVLDASRIFSDMELDEYLGLPRPNSITYNLMLKGFCKVGLLEDAKTLFESIRENDDLASLQSYNIWLQGLVRHGKFIEAETVLKQMTDKGIGPSIYSYNILMDGLCKLGMLSDAKTIVGLMKRNGVCPDAVTYGCLLHGYCSVGKVDAAKSLLQEMMRNNCLPNAYTCNILLHSLWKMGRISEAEELLRKMNEKGYGLDTVTCNIIVDGLCGSGELDKAIEIVKGMRVHGSAALGNLGNSYIGLVDDSLIENNCLPDLITYSTLLNGLCKAGRFAEAKNLFAEMMGEKLQPDSVAYNIFIHHFCKQGKISSAFRVLKDMEKKGCHKSLETYNSLILGLGIKNQIFEIHGLMDEMKEKGISPNICTYNTAIQYLCEGEKVEDATNLLDEMMQKNIAPNVFSFKYLIEAFCKVPDFDMAQEVFETAVSICGQKEGLYSLMFNELLAAGQLLKATELLEAVLDRGFELGTFLYKDLVESLCKKDELEVASGILHKMIDRGYGFDPAALMPVIDGLGKMGNKKEANSFADKMMEMASVGEVANKVDPNARDIHQKKHNKNGGNNWQNILHRDDGSGIALRSLSRVKKGWGQGDISSFQPPRVDYLDYWEDDG</sequence>